<protein>
    <recommendedName>
        <fullName evidence="1">Proline--tRNA ligase</fullName>
        <ecNumber evidence="1">6.1.1.15</ecNumber>
    </recommendedName>
    <alternativeName>
        <fullName evidence="1">Prolyl-tRNA synthetase</fullName>
        <shortName evidence="1">ProRS</shortName>
    </alternativeName>
</protein>
<comment type="function">
    <text evidence="1">Catalyzes the attachment of proline to tRNA(Pro) in a two-step reaction: proline is first activated by ATP to form Pro-AMP and then transferred to the acceptor end of tRNA(Pro). As ProRS can inadvertently accommodate and process non-cognate amino acids such as alanine and cysteine, to avoid such errors it has two additional distinct editing activities against alanine. One activity is designated as 'pretransfer' editing and involves the tRNA(Pro)-independent hydrolysis of activated Ala-AMP. The other activity is designated 'posttransfer' editing and involves deacylation of mischarged Ala-tRNA(Pro). The misacylated Cys-tRNA(Pro) is not edited by ProRS.</text>
</comment>
<comment type="catalytic activity">
    <reaction evidence="1">
        <text>tRNA(Pro) + L-proline + ATP = L-prolyl-tRNA(Pro) + AMP + diphosphate</text>
        <dbReference type="Rhea" id="RHEA:14305"/>
        <dbReference type="Rhea" id="RHEA-COMP:9700"/>
        <dbReference type="Rhea" id="RHEA-COMP:9702"/>
        <dbReference type="ChEBI" id="CHEBI:30616"/>
        <dbReference type="ChEBI" id="CHEBI:33019"/>
        <dbReference type="ChEBI" id="CHEBI:60039"/>
        <dbReference type="ChEBI" id="CHEBI:78442"/>
        <dbReference type="ChEBI" id="CHEBI:78532"/>
        <dbReference type="ChEBI" id="CHEBI:456215"/>
        <dbReference type="EC" id="6.1.1.15"/>
    </reaction>
</comment>
<comment type="subunit">
    <text evidence="1">Homodimer.</text>
</comment>
<comment type="subcellular location">
    <subcellularLocation>
        <location evidence="1">Cytoplasm</location>
    </subcellularLocation>
</comment>
<comment type="domain">
    <text evidence="1">Consists of three domains: the N-terminal catalytic domain, the editing domain and the C-terminal anticodon-binding domain.</text>
</comment>
<comment type="similarity">
    <text evidence="1">Belongs to the class-II aminoacyl-tRNA synthetase family. ProS type 1 subfamily.</text>
</comment>
<evidence type="ECO:0000255" key="1">
    <source>
        <dbReference type="HAMAP-Rule" id="MF_01569"/>
    </source>
</evidence>
<keyword id="KW-0030">Aminoacyl-tRNA synthetase</keyword>
<keyword id="KW-0067">ATP-binding</keyword>
<keyword id="KW-0963">Cytoplasm</keyword>
<keyword id="KW-0436">Ligase</keyword>
<keyword id="KW-0547">Nucleotide-binding</keyword>
<keyword id="KW-0648">Protein biosynthesis</keyword>
<keyword id="KW-1185">Reference proteome</keyword>
<dbReference type="EC" id="6.1.1.15" evidence="1"/>
<dbReference type="EMBL" id="BA000035">
    <property type="protein sequence ID" value="BAC18698.1"/>
    <property type="molecule type" value="Genomic_DNA"/>
</dbReference>
<dbReference type="RefSeq" id="WP_006767889.1">
    <property type="nucleotide sequence ID" value="NC_004369.1"/>
</dbReference>
<dbReference type="SMR" id="Q8FP97"/>
<dbReference type="STRING" id="196164.gene:10742316"/>
<dbReference type="KEGG" id="cef:CE1888"/>
<dbReference type="eggNOG" id="COG0442">
    <property type="taxonomic scope" value="Bacteria"/>
</dbReference>
<dbReference type="HOGENOM" id="CLU_016739_0_0_11"/>
<dbReference type="OrthoDB" id="9809052at2"/>
<dbReference type="Proteomes" id="UP000001409">
    <property type="component" value="Chromosome"/>
</dbReference>
<dbReference type="GO" id="GO:0005829">
    <property type="term" value="C:cytosol"/>
    <property type="evidence" value="ECO:0007669"/>
    <property type="project" value="TreeGrafter"/>
</dbReference>
<dbReference type="GO" id="GO:0002161">
    <property type="term" value="F:aminoacyl-tRNA deacylase activity"/>
    <property type="evidence" value="ECO:0007669"/>
    <property type="project" value="InterPro"/>
</dbReference>
<dbReference type="GO" id="GO:0005524">
    <property type="term" value="F:ATP binding"/>
    <property type="evidence" value="ECO:0007669"/>
    <property type="project" value="UniProtKB-UniRule"/>
</dbReference>
<dbReference type="GO" id="GO:0004827">
    <property type="term" value="F:proline-tRNA ligase activity"/>
    <property type="evidence" value="ECO:0007669"/>
    <property type="project" value="UniProtKB-UniRule"/>
</dbReference>
<dbReference type="GO" id="GO:0006433">
    <property type="term" value="P:prolyl-tRNA aminoacylation"/>
    <property type="evidence" value="ECO:0007669"/>
    <property type="project" value="UniProtKB-UniRule"/>
</dbReference>
<dbReference type="CDD" id="cd00861">
    <property type="entry name" value="ProRS_anticodon_short"/>
    <property type="match status" value="1"/>
</dbReference>
<dbReference type="CDD" id="cd00779">
    <property type="entry name" value="ProRS_core_prok"/>
    <property type="match status" value="1"/>
</dbReference>
<dbReference type="FunFam" id="3.30.930.10:FF:000065">
    <property type="entry name" value="Proline--tRNA ligase"/>
    <property type="match status" value="1"/>
</dbReference>
<dbReference type="FunFam" id="3.30.930.10:FF:000070">
    <property type="entry name" value="Proline--tRNA ligase"/>
    <property type="match status" value="1"/>
</dbReference>
<dbReference type="Gene3D" id="3.40.50.800">
    <property type="entry name" value="Anticodon-binding domain"/>
    <property type="match status" value="1"/>
</dbReference>
<dbReference type="Gene3D" id="3.30.930.10">
    <property type="entry name" value="Bira Bifunctional Protein, Domain 2"/>
    <property type="match status" value="2"/>
</dbReference>
<dbReference type="Gene3D" id="3.90.960.10">
    <property type="entry name" value="YbaK/aminoacyl-tRNA synthetase-associated domain"/>
    <property type="match status" value="1"/>
</dbReference>
<dbReference type="HAMAP" id="MF_01569">
    <property type="entry name" value="Pro_tRNA_synth_type1"/>
    <property type="match status" value="1"/>
</dbReference>
<dbReference type="InterPro" id="IPR002314">
    <property type="entry name" value="aa-tRNA-synt_IIb"/>
</dbReference>
<dbReference type="InterPro" id="IPR006195">
    <property type="entry name" value="aa-tRNA-synth_II"/>
</dbReference>
<dbReference type="InterPro" id="IPR045864">
    <property type="entry name" value="aa-tRNA-synth_II/BPL/LPL"/>
</dbReference>
<dbReference type="InterPro" id="IPR004154">
    <property type="entry name" value="Anticodon-bd"/>
</dbReference>
<dbReference type="InterPro" id="IPR036621">
    <property type="entry name" value="Anticodon-bd_dom_sf"/>
</dbReference>
<dbReference type="InterPro" id="IPR002316">
    <property type="entry name" value="Pro-tRNA-ligase_IIa"/>
</dbReference>
<dbReference type="InterPro" id="IPR004500">
    <property type="entry name" value="Pro-tRNA-synth_IIa_bac-type"/>
</dbReference>
<dbReference type="InterPro" id="IPR023717">
    <property type="entry name" value="Pro-tRNA-Synthase_IIa_type1"/>
</dbReference>
<dbReference type="InterPro" id="IPR050062">
    <property type="entry name" value="Pro-tRNA_synthetase"/>
</dbReference>
<dbReference type="InterPro" id="IPR044140">
    <property type="entry name" value="ProRS_anticodon_short"/>
</dbReference>
<dbReference type="InterPro" id="IPR033730">
    <property type="entry name" value="ProRS_core_prok"/>
</dbReference>
<dbReference type="InterPro" id="IPR036754">
    <property type="entry name" value="YbaK/aa-tRNA-synt-asso_dom_sf"/>
</dbReference>
<dbReference type="InterPro" id="IPR007214">
    <property type="entry name" value="YbaK/aa-tRNA-synth-assoc-dom"/>
</dbReference>
<dbReference type="NCBIfam" id="NF006625">
    <property type="entry name" value="PRK09194.1"/>
    <property type="match status" value="1"/>
</dbReference>
<dbReference type="NCBIfam" id="TIGR00409">
    <property type="entry name" value="proS_fam_II"/>
    <property type="match status" value="1"/>
</dbReference>
<dbReference type="PANTHER" id="PTHR42753">
    <property type="entry name" value="MITOCHONDRIAL RIBOSOME PROTEIN L39/PROLYL-TRNA LIGASE FAMILY MEMBER"/>
    <property type="match status" value="1"/>
</dbReference>
<dbReference type="PANTHER" id="PTHR42753:SF2">
    <property type="entry name" value="PROLINE--TRNA LIGASE"/>
    <property type="match status" value="1"/>
</dbReference>
<dbReference type="Pfam" id="PF03129">
    <property type="entry name" value="HGTP_anticodon"/>
    <property type="match status" value="1"/>
</dbReference>
<dbReference type="Pfam" id="PF00587">
    <property type="entry name" value="tRNA-synt_2b"/>
    <property type="match status" value="1"/>
</dbReference>
<dbReference type="Pfam" id="PF04073">
    <property type="entry name" value="tRNA_edit"/>
    <property type="match status" value="1"/>
</dbReference>
<dbReference type="PRINTS" id="PR01046">
    <property type="entry name" value="TRNASYNTHPRO"/>
</dbReference>
<dbReference type="SUPFAM" id="SSF52954">
    <property type="entry name" value="Class II aaRS ABD-related"/>
    <property type="match status" value="1"/>
</dbReference>
<dbReference type="SUPFAM" id="SSF55681">
    <property type="entry name" value="Class II aaRS and biotin synthetases"/>
    <property type="match status" value="1"/>
</dbReference>
<dbReference type="SUPFAM" id="SSF55826">
    <property type="entry name" value="YbaK/ProRS associated domain"/>
    <property type="match status" value="1"/>
</dbReference>
<dbReference type="PROSITE" id="PS50862">
    <property type="entry name" value="AA_TRNA_LIGASE_II"/>
    <property type="match status" value="1"/>
</dbReference>
<reference key="1">
    <citation type="journal article" date="2003" name="Genome Res.">
        <title>Comparative complete genome sequence analysis of the amino acid replacements responsible for the thermostability of Corynebacterium efficiens.</title>
        <authorList>
            <person name="Nishio Y."/>
            <person name="Nakamura Y."/>
            <person name="Kawarabayasi Y."/>
            <person name="Usuda Y."/>
            <person name="Kimura E."/>
            <person name="Sugimoto S."/>
            <person name="Matsui K."/>
            <person name="Yamagishi A."/>
            <person name="Kikuchi H."/>
            <person name="Ikeo K."/>
            <person name="Gojobori T."/>
        </authorList>
    </citation>
    <scope>NUCLEOTIDE SEQUENCE [LARGE SCALE GENOMIC DNA]</scope>
    <source>
        <strain>DSM 44549 / YS-314 / AJ 12310 / JCM 11189 / NBRC 100395</strain>
    </source>
</reference>
<name>SYP_COREF</name>
<gene>
    <name evidence="1" type="primary">proS</name>
    <name type="ordered locus">CE1888</name>
</gene>
<accession>Q8FP97</accession>
<feature type="chain" id="PRO_0000248677" description="Proline--tRNA ligase">
    <location>
        <begin position="1"/>
        <end position="588"/>
    </location>
</feature>
<proteinExistence type="inferred from homology"/>
<organism>
    <name type="scientific">Corynebacterium efficiens (strain DSM 44549 / YS-314 / AJ 12310 / JCM 11189 / NBRC 100395)</name>
    <dbReference type="NCBI Taxonomy" id="196164"/>
    <lineage>
        <taxon>Bacteria</taxon>
        <taxon>Bacillati</taxon>
        <taxon>Actinomycetota</taxon>
        <taxon>Actinomycetes</taxon>
        <taxon>Mycobacteriales</taxon>
        <taxon>Corynebacteriaceae</taxon>
        <taxon>Corynebacterium</taxon>
    </lineage>
</organism>
<sequence length="588" mass="64662">MITRLSTLFLRTLREDPADAEVPSHKLLVRAGYIRRVAPGVYSWLPLGLRALRNIEQVVREEMDAIGGQELLFPGLLPREPYETTQRWTEYGDSLFRLKDRKGADYLLGPTHEEMFASTVKDLYSSYKDFPVTLYQIQTKYRDEERPRAGILRGREFVMKDSYSFDMTDAGLEESYARHRAAYQRIFDRLGIEYVICKATSGAMGGSASEEFLAVSANGEDTFVRATDGDFAANVEAVVTQPGQERPIEGLPEAVVHETPVSETIETLVAWANSIGVTVDGREVQASDTLKCIVVKTREPGAEEWELTGVLVPGDREVDMKRLEASLEPAEVELAVEADFAKYPFLVKGYVGPVGLARNGVRVLADPRVVTGTSWITGADEKERHVVGLVAGRDFTPDGFIEAAEIREGDPAPEGQGTLTLARGIEIGHIFQLGRKYTEAFDVQILDENGKRAIPTMGSYGIGVSRLLAVLAEQRHDEAGLNWSPAVAPYQVHVVAANKDAAAIEAAERYATELSQAGIDVLFDDRPKVSPGVKFKDAELLGMPFALILGRGYADGTVELRVRGGEKTELPVDEAVETIVRLVNEARG</sequence>